<evidence type="ECO:0000255" key="1">
    <source>
        <dbReference type="HAMAP-Rule" id="MF_00550"/>
    </source>
</evidence>
<reference key="1">
    <citation type="journal article" date="2008" name="Genome Res.">
        <title>Comparative genome analysis of Salmonella enteritidis PT4 and Salmonella gallinarum 287/91 provides insights into evolutionary and host adaptation pathways.</title>
        <authorList>
            <person name="Thomson N.R."/>
            <person name="Clayton D.J."/>
            <person name="Windhorst D."/>
            <person name="Vernikos G."/>
            <person name="Davidson S."/>
            <person name="Churcher C."/>
            <person name="Quail M.A."/>
            <person name="Stevens M."/>
            <person name="Jones M.A."/>
            <person name="Watson M."/>
            <person name="Barron A."/>
            <person name="Layton A."/>
            <person name="Pickard D."/>
            <person name="Kingsley R.A."/>
            <person name="Bignell A."/>
            <person name="Clark L."/>
            <person name="Harris B."/>
            <person name="Ormond D."/>
            <person name="Abdellah Z."/>
            <person name="Brooks K."/>
            <person name="Cherevach I."/>
            <person name="Chillingworth T."/>
            <person name="Woodward J."/>
            <person name="Norberczak H."/>
            <person name="Lord A."/>
            <person name="Arrowsmith C."/>
            <person name="Jagels K."/>
            <person name="Moule S."/>
            <person name="Mungall K."/>
            <person name="Saunders M."/>
            <person name="Whitehead S."/>
            <person name="Chabalgoity J.A."/>
            <person name="Maskell D."/>
            <person name="Humphreys T."/>
            <person name="Roberts M."/>
            <person name="Barrow P.A."/>
            <person name="Dougan G."/>
            <person name="Parkhill J."/>
        </authorList>
    </citation>
    <scope>NUCLEOTIDE SEQUENCE [LARGE SCALE GENOMIC DNA]</scope>
    <source>
        <strain>P125109</strain>
    </source>
</reference>
<comment type="function">
    <text evidence="1">Cleaves the N-terminal amino acid of tripeptides.</text>
</comment>
<comment type="catalytic activity">
    <reaction evidence="1">
        <text>Release of the N-terminal residue from a tripeptide.</text>
        <dbReference type="EC" id="3.4.11.4"/>
    </reaction>
</comment>
<comment type="cofactor">
    <cofactor evidence="1">
        <name>Zn(2+)</name>
        <dbReference type="ChEBI" id="CHEBI:29105"/>
    </cofactor>
    <text evidence="1">Binds 2 Zn(2+) ions per subunit.</text>
</comment>
<comment type="subcellular location">
    <subcellularLocation>
        <location evidence="1">Cytoplasm</location>
    </subcellularLocation>
</comment>
<comment type="similarity">
    <text evidence="1">Belongs to the peptidase M20B family.</text>
</comment>
<keyword id="KW-0031">Aminopeptidase</keyword>
<keyword id="KW-0963">Cytoplasm</keyword>
<keyword id="KW-0378">Hydrolase</keyword>
<keyword id="KW-0479">Metal-binding</keyword>
<keyword id="KW-0482">Metalloprotease</keyword>
<keyword id="KW-0645">Protease</keyword>
<keyword id="KW-0862">Zinc</keyword>
<organism>
    <name type="scientific">Salmonella enteritidis PT4 (strain P125109)</name>
    <dbReference type="NCBI Taxonomy" id="550537"/>
    <lineage>
        <taxon>Bacteria</taxon>
        <taxon>Pseudomonadati</taxon>
        <taxon>Pseudomonadota</taxon>
        <taxon>Gammaproteobacteria</taxon>
        <taxon>Enterobacterales</taxon>
        <taxon>Enterobacteriaceae</taxon>
        <taxon>Salmonella</taxon>
    </lineage>
</organism>
<gene>
    <name evidence="1" type="primary">pepT</name>
    <name type="ordered locus">SEN1822</name>
</gene>
<accession>B5QXA9</accession>
<sequence length="409" mass="44893">MDKLLERFLHYVSLDTQSKSGVRQVPSTEGQWKLLRLLKQQLEEMGLVNITLSEKGTLMATLPANVEGDIPAIGFISHVDTSPDFSGKNVNPQIVENYRGGDIALGIGDEVLSPVMFPVLHQLLGQTLITTDGKTLLGADDKAGVAEIMTALAVLKGNPIPHGEIKVAFTPDEEVGKGAKHFDVEAFGAQWAYTVDGGGVGELEFENFNAASVNIKIVGNNVHPGTAKGVMVNALSLAARIHAEVPADETPETTEGYEGFYHLASMKGTVDRAEMHYIIRDFDRKQFEARKRKMMEIAKKVGKGLHPDCYIELVIEDSYYNMREKVVEHPHILDIAQQAMRDCHITPEMKPIRGGTDGAQLSFMGLPCPNLFTGGYNYHGKHEFVTLEGMEKAVQVIVRIAELTAKRGQ</sequence>
<name>PEPT_SALEP</name>
<proteinExistence type="inferred from homology"/>
<dbReference type="EC" id="3.4.11.4" evidence="1"/>
<dbReference type="EMBL" id="AM933172">
    <property type="protein sequence ID" value="CAR33402.1"/>
    <property type="molecule type" value="Genomic_DNA"/>
</dbReference>
<dbReference type="RefSeq" id="WP_000359415.1">
    <property type="nucleotide sequence ID" value="NC_011294.1"/>
</dbReference>
<dbReference type="SMR" id="B5QXA9"/>
<dbReference type="MEROPS" id="M20.003"/>
<dbReference type="KEGG" id="set:SEN1822"/>
<dbReference type="HOGENOM" id="CLU_053676_0_0_6"/>
<dbReference type="Proteomes" id="UP000000613">
    <property type="component" value="Chromosome"/>
</dbReference>
<dbReference type="GO" id="GO:0005829">
    <property type="term" value="C:cytosol"/>
    <property type="evidence" value="ECO:0007669"/>
    <property type="project" value="TreeGrafter"/>
</dbReference>
<dbReference type="GO" id="GO:0008237">
    <property type="term" value="F:metallopeptidase activity"/>
    <property type="evidence" value="ECO:0007669"/>
    <property type="project" value="UniProtKB-KW"/>
</dbReference>
<dbReference type="GO" id="GO:0045148">
    <property type="term" value="F:tripeptide aminopeptidase activity"/>
    <property type="evidence" value="ECO:0007669"/>
    <property type="project" value="UniProtKB-UniRule"/>
</dbReference>
<dbReference type="GO" id="GO:0008270">
    <property type="term" value="F:zinc ion binding"/>
    <property type="evidence" value="ECO:0007669"/>
    <property type="project" value="UniProtKB-UniRule"/>
</dbReference>
<dbReference type="GO" id="GO:0043171">
    <property type="term" value="P:peptide catabolic process"/>
    <property type="evidence" value="ECO:0007669"/>
    <property type="project" value="UniProtKB-UniRule"/>
</dbReference>
<dbReference type="GO" id="GO:0006508">
    <property type="term" value="P:proteolysis"/>
    <property type="evidence" value="ECO:0007669"/>
    <property type="project" value="UniProtKB-UniRule"/>
</dbReference>
<dbReference type="CDD" id="cd03892">
    <property type="entry name" value="M20_peptT"/>
    <property type="match status" value="1"/>
</dbReference>
<dbReference type="FunFam" id="3.30.70.360:FF:000002">
    <property type="entry name" value="Peptidase T"/>
    <property type="match status" value="1"/>
</dbReference>
<dbReference type="Gene3D" id="3.30.70.360">
    <property type="match status" value="1"/>
</dbReference>
<dbReference type="Gene3D" id="3.40.630.10">
    <property type="entry name" value="Zn peptidases"/>
    <property type="match status" value="1"/>
</dbReference>
<dbReference type="HAMAP" id="MF_00550">
    <property type="entry name" value="Aminopeptidase_M20"/>
    <property type="match status" value="1"/>
</dbReference>
<dbReference type="InterPro" id="IPR001261">
    <property type="entry name" value="ArgE/DapE_CS"/>
</dbReference>
<dbReference type="InterPro" id="IPR036264">
    <property type="entry name" value="Bact_exopeptidase_dim_dom"/>
</dbReference>
<dbReference type="InterPro" id="IPR002933">
    <property type="entry name" value="Peptidase_M20"/>
</dbReference>
<dbReference type="InterPro" id="IPR011650">
    <property type="entry name" value="Peptidase_M20_dimer"/>
</dbReference>
<dbReference type="InterPro" id="IPR010161">
    <property type="entry name" value="Peptidase_M20B"/>
</dbReference>
<dbReference type="NCBIfam" id="TIGR01882">
    <property type="entry name" value="peptidase-T"/>
    <property type="match status" value="1"/>
</dbReference>
<dbReference type="NCBIfam" id="NF003976">
    <property type="entry name" value="PRK05469.1"/>
    <property type="match status" value="1"/>
</dbReference>
<dbReference type="NCBIfam" id="NF009920">
    <property type="entry name" value="PRK13381.1"/>
    <property type="match status" value="1"/>
</dbReference>
<dbReference type="PANTHER" id="PTHR42994">
    <property type="entry name" value="PEPTIDASE T"/>
    <property type="match status" value="1"/>
</dbReference>
<dbReference type="PANTHER" id="PTHR42994:SF1">
    <property type="entry name" value="PEPTIDASE T"/>
    <property type="match status" value="1"/>
</dbReference>
<dbReference type="Pfam" id="PF07687">
    <property type="entry name" value="M20_dimer"/>
    <property type="match status" value="1"/>
</dbReference>
<dbReference type="Pfam" id="PF01546">
    <property type="entry name" value="Peptidase_M20"/>
    <property type="match status" value="1"/>
</dbReference>
<dbReference type="PIRSF" id="PIRSF037215">
    <property type="entry name" value="Peptidase_M20B"/>
    <property type="match status" value="1"/>
</dbReference>
<dbReference type="SUPFAM" id="SSF55031">
    <property type="entry name" value="Bacterial exopeptidase dimerisation domain"/>
    <property type="match status" value="1"/>
</dbReference>
<dbReference type="SUPFAM" id="SSF53187">
    <property type="entry name" value="Zn-dependent exopeptidases"/>
    <property type="match status" value="1"/>
</dbReference>
<dbReference type="PROSITE" id="PS00758">
    <property type="entry name" value="ARGE_DAPE_CPG2_1"/>
    <property type="match status" value="1"/>
</dbReference>
<dbReference type="PROSITE" id="PS00759">
    <property type="entry name" value="ARGE_DAPE_CPG2_2"/>
    <property type="match status" value="1"/>
</dbReference>
<protein>
    <recommendedName>
        <fullName evidence="1">Peptidase T</fullName>
        <ecNumber evidence="1">3.4.11.4</ecNumber>
    </recommendedName>
    <alternativeName>
        <fullName evidence="1">Aminotripeptidase</fullName>
        <shortName evidence="1">Tripeptidase</shortName>
    </alternativeName>
    <alternativeName>
        <fullName evidence="1">Tripeptide aminopeptidase</fullName>
    </alternativeName>
</protein>
<feature type="chain" id="PRO_1000129040" description="Peptidase T">
    <location>
        <begin position="1"/>
        <end position="409"/>
    </location>
</feature>
<feature type="active site" evidence="1">
    <location>
        <position position="80"/>
    </location>
</feature>
<feature type="active site" description="Proton acceptor" evidence="1">
    <location>
        <position position="173"/>
    </location>
</feature>
<feature type="binding site" evidence="1">
    <location>
        <position position="78"/>
    </location>
    <ligand>
        <name>Zn(2+)</name>
        <dbReference type="ChEBI" id="CHEBI:29105"/>
        <label>1</label>
    </ligand>
</feature>
<feature type="binding site" evidence="1">
    <location>
        <position position="140"/>
    </location>
    <ligand>
        <name>Zn(2+)</name>
        <dbReference type="ChEBI" id="CHEBI:29105"/>
        <label>1</label>
    </ligand>
</feature>
<feature type="binding site" evidence="1">
    <location>
        <position position="140"/>
    </location>
    <ligand>
        <name>Zn(2+)</name>
        <dbReference type="ChEBI" id="CHEBI:29105"/>
        <label>2</label>
    </ligand>
</feature>
<feature type="binding site" evidence="1">
    <location>
        <position position="174"/>
    </location>
    <ligand>
        <name>Zn(2+)</name>
        <dbReference type="ChEBI" id="CHEBI:29105"/>
        <label>2</label>
    </ligand>
</feature>
<feature type="binding site" evidence="1">
    <location>
        <position position="196"/>
    </location>
    <ligand>
        <name>Zn(2+)</name>
        <dbReference type="ChEBI" id="CHEBI:29105"/>
        <label>1</label>
    </ligand>
</feature>
<feature type="binding site" evidence="1">
    <location>
        <position position="379"/>
    </location>
    <ligand>
        <name>Zn(2+)</name>
        <dbReference type="ChEBI" id="CHEBI:29105"/>
        <label>2</label>
    </ligand>
</feature>